<evidence type="ECO:0000255" key="1">
    <source>
        <dbReference type="HAMAP-Rule" id="MF_00674"/>
    </source>
</evidence>
<feature type="chain" id="PRO_1000082956" description="UPF0251 protein Spea_3639">
    <location>
        <begin position="1"/>
        <end position="96"/>
    </location>
</feature>
<protein>
    <recommendedName>
        <fullName evidence="1">UPF0251 protein Spea_3639</fullName>
    </recommendedName>
</protein>
<comment type="similarity">
    <text evidence="1">Belongs to the UPF0251 family.</text>
</comment>
<sequence length="96" mass="10507">MSRPKKCRHLSCCVPYSLFKPNGIPSTQLEKIQLEADEFEALNLGDVQKMSQLDAAALMGISRQTFGYLLASARKKVATAVTQGQALLLPQIANKD</sequence>
<accession>A8H8R3</accession>
<dbReference type="EMBL" id="CP000851">
    <property type="protein sequence ID" value="ABV88950.1"/>
    <property type="molecule type" value="Genomic_DNA"/>
</dbReference>
<dbReference type="RefSeq" id="WP_012156834.1">
    <property type="nucleotide sequence ID" value="NC_009901.1"/>
</dbReference>
<dbReference type="SMR" id="A8H8R3"/>
<dbReference type="STRING" id="398579.Spea_3639"/>
<dbReference type="KEGG" id="spl:Spea_3639"/>
<dbReference type="eggNOG" id="COG1342">
    <property type="taxonomic scope" value="Bacteria"/>
</dbReference>
<dbReference type="HOGENOM" id="CLU_094511_2_1_6"/>
<dbReference type="OrthoDB" id="280278at2"/>
<dbReference type="Proteomes" id="UP000002608">
    <property type="component" value="Chromosome"/>
</dbReference>
<dbReference type="Gene3D" id="1.10.10.10">
    <property type="entry name" value="Winged helix-like DNA-binding domain superfamily/Winged helix DNA-binding domain"/>
    <property type="match status" value="1"/>
</dbReference>
<dbReference type="HAMAP" id="MF_00674">
    <property type="entry name" value="UPF0251"/>
    <property type="match status" value="1"/>
</dbReference>
<dbReference type="InterPro" id="IPR002852">
    <property type="entry name" value="UPF0251"/>
</dbReference>
<dbReference type="InterPro" id="IPR036388">
    <property type="entry name" value="WH-like_DNA-bd_sf"/>
</dbReference>
<dbReference type="PANTHER" id="PTHR37478">
    <property type="match status" value="1"/>
</dbReference>
<dbReference type="PANTHER" id="PTHR37478:SF2">
    <property type="entry name" value="UPF0251 PROTEIN TK0562"/>
    <property type="match status" value="1"/>
</dbReference>
<dbReference type="Pfam" id="PF02001">
    <property type="entry name" value="DUF134"/>
    <property type="match status" value="1"/>
</dbReference>
<name>Y3639_SHEPA</name>
<reference key="1">
    <citation type="submission" date="2007-10" db="EMBL/GenBank/DDBJ databases">
        <title>Complete sequence of Shewanella pealeana ATCC 700345.</title>
        <authorList>
            <consortium name="US DOE Joint Genome Institute"/>
            <person name="Copeland A."/>
            <person name="Lucas S."/>
            <person name="Lapidus A."/>
            <person name="Barry K."/>
            <person name="Glavina del Rio T."/>
            <person name="Dalin E."/>
            <person name="Tice H."/>
            <person name="Pitluck S."/>
            <person name="Chertkov O."/>
            <person name="Brettin T."/>
            <person name="Bruce D."/>
            <person name="Detter J.C."/>
            <person name="Han C."/>
            <person name="Schmutz J."/>
            <person name="Larimer F."/>
            <person name="Land M."/>
            <person name="Hauser L."/>
            <person name="Kyrpides N."/>
            <person name="Kim E."/>
            <person name="Zhao J.-S.Z."/>
            <person name="Manno D."/>
            <person name="Hawari J."/>
            <person name="Richardson P."/>
        </authorList>
    </citation>
    <scope>NUCLEOTIDE SEQUENCE [LARGE SCALE GENOMIC DNA]</scope>
    <source>
        <strain>ATCC 700345 / ANG-SQ1</strain>
    </source>
</reference>
<organism>
    <name type="scientific">Shewanella pealeana (strain ATCC 700345 / ANG-SQ1)</name>
    <dbReference type="NCBI Taxonomy" id="398579"/>
    <lineage>
        <taxon>Bacteria</taxon>
        <taxon>Pseudomonadati</taxon>
        <taxon>Pseudomonadota</taxon>
        <taxon>Gammaproteobacteria</taxon>
        <taxon>Alteromonadales</taxon>
        <taxon>Shewanellaceae</taxon>
        <taxon>Shewanella</taxon>
    </lineage>
</organism>
<keyword id="KW-1185">Reference proteome</keyword>
<gene>
    <name type="ordered locus">Spea_3639</name>
</gene>
<proteinExistence type="inferred from homology"/>